<sequence length="411" mass="46927">MTDGPIKVNSEIGALKTVLLKRPGKELENLVPDYLDGLLFDDIPYLEVAQKEHDHFAQVLREEGVEVLYLEKLAAESIENPQVRSEFIDDVLAESKKTILGHEEEIKALFATLSNQELVDKIMSGVRKEEINPKCTHLVEYMDDKYPFYLDPMPNLYFTRDPQASIGHGITINRMFWRARRRESIFIQYIVKHHPRFKDANIPIWLDRDCPFNIEGGDELVLSKEVLAIGVSERTSAQAIEKLARRIFENPQATFKKVVAIEIPTSRTFMHLDTVFTMIDYDKFTIHSAILKAEGNMNIFIIEYDDVNKDISIKQSSHLKDTLEDVLGIDDIQFIPTGNGDVIDGAREQWNDGSNTLCIRPGVVVTYDRNYVSNDLLRQKGIKVIEISGSELVRGRGGPRCMSQPLFREDI</sequence>
<comment type="catalytic activity">
    <reaction evidence="1">
        <text>L-arginine + H2O = L-citrulline + NH4(+)</text>
        <dbReference type="Rhea" id="RHEA:19597"/>
        <dbReference type="ChEBI" id="CHEBI:15377"/>
        <dbReference type="ChEBI" id="CHEBI:28938"/>
        <dbReference type="ChEBI" id="CHEBI:32682"/>
        <dbReference type="ChEBI" id="CHEBI:57743"/>
        <dbReference type="EC" id="3.5.3.6"/>
    </reaction>
</comment>
<comment type="pathway">
    <text evidence="1">Amino-acid degradation; L-arginine degradation via ADI pathway; carbamoyl phosphate from L-arginine: step 1/2.</text>
</comment>
<comment type="subcellular location">
    <subcellularLocation>
        <location evidence="1">Cytoplasm</location>
    </subcellularLocation>
</comment>
<comment type="similarity">
    <text evidence="1">Belongs to the arginine deiminase family.</text>
</comment>
<evidence type="ECO:0000255" key="1">
    <source>
        <dbReference type="HAMAP-Rule" id="MF_00242"/>
    </source>
</evidence>
<accession>Q6GDG7</accession>
<organism>
    <name type="scientific">Staphylococcus aureus (strain MRSA252)</name>
    <dbReference type="NCBI Taxonomy" id="282458"/>
    <lineage>
        <taxon>Bacteria</taxon>
        <taxon>Bacillati</taxon>
        <taxon>Bacillota</taxon>
        <taxon>Bacilli</taxon>
        <taxon>Bacillales</taxon>
        <taxon>Staphylococcaceae</taxon>
        <taxon>Staphylococcus</taxon>
    </lineage>
</organism>
<proteinExistence type="inferred from homology"/>
<name>ARCA_STAAR</name>
<reference key="1">
    <citation type="journal article" date="2004" name="Proc. Natl. Acad. Sci. U.S.A.">
        <title>Complete genomes of two clinical Staphylococcus aureus strains: evidence for the rapid evolution of virulence and drug resistance.</title>
        <authorList>
            <person name="Holden M.T.G."/>
            <person name="Feil E.J."/>
            <person name="Lindsay J.A."/>
            <person name="Peacock S.J."/>
            <person name="Day N.P.J."/>
            <person name="Enright M.C."/>
            <person name="Foster T.J."/>
            <person name="Moore C.E."/>
            <person name="Hurst L."/>
            <person name="Atkin R."/>
            <person name="Barron A."/>
            <person name="Bason N."/>
            <person name="Bentley S.D."/>
            <person name="Chillingworth C."/>
            <person name="Chillingworth T."/>
            <person name="Churcher C."/>
            <person name="Clark L."/>
            <person name="Corton C."/>
            <person name="Cronin A."/>
            <person name="Doggett J."/>
            <person name="Dowd L."/>
            <person name="Feltwell T."/>
            <person name="Hance Z."/>
            <person name="Harris B."/>
            <person name="Hauser H."/>
            <person name="Holroyd S."/>
            <person name="Jagels K."/>
            <person name="James K.D."/>
            <person name="Lennard N."/>
            <person name="Line A."/>
            <person name="Mayes R."/>
            <person name="Moule S."/>
            <person name="Mungall K."/>
            <person name="Ormond D."/>
            <person name="Quail M.A."/>
            <person name="Rabbinowitsch E."/>
            <person name="Rutherford K.M."/>
            <person name="Sanders M."/>
            <person name="Sharp S."/>
            <person name="Simmonds M."/>
            <person name="Stevens K."/>
            <person name="Whitehead S."/>
            <person name="Barrell B.G."/>
            <person name="Spratt B.G."/>
            <person name="Parkhill J."/>
        </authorList>
    </citation>
    <scope>NUCLEOTIDE SEQUENCE [LARGE SCALE GENOMIC DNA]</scope>
    <source>
        <strain>MRSA252</strain>
    </source>
</reference>
<keyword id="KW-0056">Arginine metabolism</keyword>
<keyword id="KW-0963">Cytoplasm</keyword>
<keyword id="KW-0378">Hydrolase</keyword>
<gene>
    <name evidence="1" type="primary">arcA</name>
    <name type="ordered locus">SAR2714</name>
</gene>
<dbReference type="EC" id="3.5.3.6" evidence="1"/>
<dbReference type="EMBL" id="BX571856">
    <property type="protein sequence ID" value="CAG41692.1"/>
    <property type="molecule type" value="Genomic_DNA"/>
</dbReference>
<dbReference type="RefSeq" id="WP_000129413.1">
    <property type="nucleotide sequence ID" value="NC_002952.2"/>
</dbReference>
<dbReference type="SMR" id="Q6GDG7"/>
<dbReference type="KEGG" id="sar:SAR2714"/>
<dbReference type="HOGENOM" id="CLU_052662_0_1_9"/>
<dbReference type="UniPathway" id="UPA00254">
    <property type="reaction ID" value="UER00364"/>
</dbReference>
<dbReference type="Proteomes" id="UP000000596">
    <property type="component" value="Chromosome"/>
</dbReference>
<dbReference type="GO" id="GO:0005737">
    <property type="term" value="C:cytoplasm"/>
    <property type="evidence" value="ECO:0007669"/>
    <property type="project" value="UniProtKB-SubCell"/>
</dbReference>
<dbReference type="GO" id="GO:0016990">
    <property type="term" value="F:arginine deiminase activity"/>
    <property type="evidence" value="ECO:0007669"/>
    <property type="project" value="UniProtKB-UniRule"/>
</dbReference>
<dbReference type="GO" id="GO:0019547">
    <property type="term" value="P:arginine catabolic process to ornithine"/>
    <property type="evidence" value="ECO:0007669"/>
    <property type="project" value="UniProtKB-UniRule"/>
</dbReference>
<dbReference type="GO" id="GO:0019546">
    <property type="term" value="P:arginine deiminase pathway"/>
    <property type="evidence" value="ECO:0007669"/>
    <property type="project" value="TreeGrafter"/>
</dbReference>
<dbReference type="FunFam" id="1.10.3930.10:FF:000001">
    <property type="entry name" value="Arginine deiminase"/>
    <property type="match status" value="1"/>
</dbReference>
<dbReference type="Gene3D" id="1.10.3930.10">
    <property type="entry name" value="Arginine deiminase"/>
    <property type="match status" value="1"/>
</dbReference>
<dbReference type="Gene3D" id="3.75.10.10">
    <property type="entry name" value="L-arginine/glycine Amidinotransferase, Chain A"/>
    <property type="match status" value="1"/>
</dbReference>
<dbReference type="HAMAP" id="MF_00242">
    <property type="entry name" value="Arg_deiminase"/>
    <property type="match status" value="1"/>
</dbReference>
<dbReference type="InterPro" id="IPR003876">
    <property type="entry name" value="Arg_deiminase"/>
</dbReference>
<dbReference type="NCBIfam" id="TIGR01078">
    <property type="entry name" value="arcA"/>
    <property type="match status" value="1"/>
</dbReference>
<dbReference type="NCBIfam" id="NF002381">
    <property type="entry name" value="PRK01388.1"/>
    <property type="match status" value="1"/>
</dbReference>
<dbReference type="PANTHER" id="PTHR47271">
    <property type="entry name" value="ARGININE DEIMINASE"/>
    <property type="match status" value="1"/>
</dbReference>
<dbReference type="PANTHER" id="PTHR47271:SF2">
    <property type="entry name" value="ARGININE DEIMINASE"/>
    <property type="match status" value="1"/>
</dbReference>
<dbReference type="Pfam" id="PF02274">
    <property type="entry name" value="ADI"/>
    <property type="match status" value="1"/>
</dbReference>
<dbReference type="PIRSF" id="PIRSF006356">
    <property type="entry name" value="Arg_deiminase"/>
    <property type="match status" value="1"/>
</dbReference>
<dbReference type="PRINTS" id="PR01466">
    <property type="entry name" value="ARGDEIMINASE"/>
</dbReference>
<dbReference type="SUPFAM" id="SSF55909">
    <property type="entry name" value="Pentein"/>
    <property type="match status" value="1"/>
</dbReference>
<protein>
    <recommendedName>
        <fullName evidence="1">Arginine deiminase</fullName>
        <shortName evidence="1">ADI</shortName>
        <ecNumber evidence="1">3.5.3.6</ecNumber>
    </recommendedName>
    <alternativeName>
        <fullName evidence="1">Arginine dihydrolase</fullName>
        <shortName evidence="1">AD</shortName>
    </alternativeName>
</protein>
<feature type="chain" id="PRO_0000182237" description="Arginine deiminase">
    <location>
        <begin position="1"/>
        <end position="411"/>
    </location>
</feature>
<feature type="active site" description="Amidino-cysteine intermediate" evidence="1">
    <location>
        <position position="401"/>
    </location>
</feature>